<evidence type="ECO:0000255" key="1">
    <source>
        <dbReference type="HAMAP-Rule" id="MF_00186"/>
    </source>
</evidence>
<comment type="function">
    <text evidence="1">Key enzyme in the regulation of glycerol uptake and metabolism. Catalyzes the phosphorylation of glycerol to yield sn-glycerol 3-phosphate.</text>
</comment>
<comment type="catalytic activity">
    <reaction evidence="1">
        <text>glycerol + ATP = sn-glycerol 3-phosphate + ADP + H(+)</text>
        <dbReference type="Rhea" id="RHEA:21644"/>
        <dbReference type="ChEBI" id="CHEBI:15378"/>
        <dbReference type="ChEBI" id="CHEBI:17754"/>
        <dbReference type="ChEBI" id="CHEBI:30616"/>
        <dbReference type="ChEBI" id="CHEBI:57597"/>
        <dbReference type="ChEBI" id="CHEBI:456216"/>
        <dbReference type="EC" id="2.7.1.30"/>
    </reaction>
</comment>
<comment type="activity regulation">
    <text evidence="1">Activated by phosphorylation and inhibited by fructose 1,6-bisphosphate (FBP).</text>
</comment>
<comment type="pathway">
    <text evidence="1">Polyol metabolism; glycerol degradation via glycerol kinase pathway; sn-glycerol 3-phosphate from glycerol: step 1/1.</text>
</comment>
<comment type="subunit">
    <text evidence="1">Homotetramer and homodimer (in equilibrium).</text>
</comment>
<comment type="similarity">
    <text evidence="1">Belongs to the FGGY kinase family.</text>
</comment>
<feature type="chain" id="PRO_1000124190" description="Glycerol kinase">
    <location>
        <begin position="1"/>
        <end position="494"/>
    </location>
</feature>
<feature type="binding site" evidence="1">
    <location>
        <position position="12"/>
    </location>
    <ligand>
        <name>ADP</name>
        <dbReference type="ChEBI" id="CHEBI:456216"/>
    </ligand>
</feature>
<feature type="binding site" evidence="1">
    <location>
        <position position="12"/>
    </location>
    <ligand>
        <name>ATP</name>
        <dbReference type="ChEBI" id="CHEBI:30616"/>
    </ligand>
</feature>
<feature type="binding site" evidence="1">
    <location>
        <position position="12"/>
    </location>
    <ligand>
        <name>sn-glycerol 3-phosphate</name>
        <dbReference type="ChEBI" id="CHEBI:57597"/>
    </ligand>
</feature>
<feature type="binding site" evidence="1">
    <location>
        <position position="13"/>
    </location>
    <ligand>
        <name>ATP</name>
        <dbReference type="ChEBI" id="CHEBI:30616"/>
    </ligand>
</feature>
<feature type="binding site" evidence="1">
    <location>
        <position position="14"/>
    </location>
    <ligand>
        <name>ATP</name>
        <dbReference type="ChEBI" id="CHEBI:30616"/>
    </ligand>
</feature>
<feature type="binding site" evidence="1">
    <location>
        <position position="16"/>
    </location>
    <ligand>
        <name>ADP</name>
        <dbReference type="ChEBI" id="CHEBI:456216"/>
    </ligand>
</feature>
<feature type="binding site" evidence="1">
    <location>
        <position position="82"/>
    </location>
    <ligand>
        <name>glycerol</name>
        <dbReference type="ChEBI" id="CHEBI:17754"/>
    </ligand>
</feature>
<feature type="binding site" evidence="1">
    <location>
        <position position="82"/>
    </location>
    <ligand>
        <name>sn-glycerol 3-phosphate</name>
        <dbReference type="ChEBI" id="CHEBI:57597"/>
    </ligand>
</feature>
<feature type="binding site" evidence="1">
    <location>
        <position position="83"/>
    </location>
    <ligand>
        <name>glycerol</name>
        <dbReference type="ChEBI" id="CHEBI:17754"/>
    </ligand>
</feature>
<feature type="binding site" evidence="1">
    <location>
        <position position="83"/>
    </location>
    <ligand>
        <name>sn-glycerol 3-phosphate</name>
        <dbReference type="ChEBI" id="CHEBI:57597"/>
    </ligand>
</feature>
<feature type="binding site" evidence="1">
    <location>
        <position position="134"/>
    </location>
    <ligand>
        <name>glycerol</name>
        <dbReference type="ChEBI" id="CHEBI:17754"/>
    </ligand>
</feature>
<feature type="binding site" evidence="1">
    <location>
        <position position="134"/>
    </location>
    <ligand>
        <name>sn-glycerol 3-phosphate</name>
        <dbReference type="ChEBI" id="CHEBI:57597"/>
    </ligand>
</feature>
<feature type="binding site" evidence="1">
    <location>
        <position position="244"/>
    </location>
    <ligand>
        <name>glycerol</name>
        <dbReference type="ChEBI" id="CHEBI:17754"/>
    </ligand>
</feature>
<feature type="binding site" evidence="1">
    <location>
        <position position="244"/>
    </location>
    <ligand>
        <name>sn-glycerol 3-phosphate</name>
        <dbReference type="ChEBI" id="CHEBI:57597"/>
    </ligand>
</feature>
<feature type="binding site" evidence="1">
    <location>
        <position position="245"/>
    </location>
    <ligand>
        <name>glycerol</name>
        <dbReference type="ChEBI" id="CHEBI:17754"/>
    </ligand>
</feature>
<feature type="binding site" evidence="1">
    <location>
        <position position="266"/>
    </location>
    <ligand>
        <name>ADP</name>
        <dbReference type="ChEBI" id="CHEBI:456216"/>
    </ligand>
</feature>
<feature type="binding site" evidence="1">
    <location>
        <position position="266"/>
    </location>
    <ligand>
        <name>ATP</name>
        <dbReference type="ChEBI" id="CHEBI:30616"/>
    </ligand>
</feature>
<feature type="binding site" evidence="1">
    <location>
        <position position="309"/>
    </location>
    <ligand>
        <name>ADP</name>
        <dbReference type="ChEBI" id="CHEBI:456216"/>
    </ligand>
</feature>
<feature type="binding site" evidence="1">
    <location>
        <position position="309"/>
    </location>
    <ligand>
        <name>ATP</name>
        <dbReference type="ChEBI" id="CHEBI:30616"/>
    </ligand>
</feature>
<feature type="binding site" evidence="1">
    <location>
        <position position="313"/>
    </location>
    <ligand>
        <name>ATP</name>
        <dbReference type="ChEBI" id="CHEBI:30616"/>
    </ligand>
</feature>
<feature type="binding site" evidence="1">
    <location>
        <position position="410"/>
    </location>
    <ligand>
        <name>ADP</name>
        <dbReference type="ChEBI" id="CHEBI:456216"/>
    </ligand>
</feature>
<feature type="binding site" evidence="1">
    <location>
        <position position="410"/>
    </location>
    <ligand>
        <name>ATP</name>
        <dbReference type="ChEBI" id="CHEBI:30616"/>
    </ligand>
</feature>
<feature type="binding site" evidence="1">
    <location>
        <position position="414"/>
    </location>
    <ligand>
        <name>ADP</name>
        <dbReference type="ChEBI" id="CHEBI:456216"/>
    </ligand>
</feature>
<dbReference type="EC" id="2.7.1.30" evidence="1"/>
<dbReference type="EMBL" id="CP001336">
    <property type="protein sequence ID" value="ACL22678.1"/>
    <property type="molecule type" value="Genomic_DNA"/>
</dbReference>
<dbReference type="RefSeq" id="WP_015945391.1">
    <property type="nucleotide sequence ID" value="NC_011830.1"/>
</dbReference>
<dbReference type="SMR" id="B8FXS7"/>
<dbReference type="KEGG" id="dhd:Dhaf_4681"/>
<dbReference type="HOGENOM" id="CLU_009281_2_3_9"/>
<dbReference type="UniPathway" id="UPA00618">
    <property type="reaction ID" value="UER00672"/>
</dbReference>
<dbReference type="Proteomes" id="UP000007726">
    <property type="component" value="Chromosome"/>
</dbReference>
<dbReference type="GO" id="GO:0005829">
    <property type="term" value="C:cytosol"/>
    <property type="evidence" value="ECO:0007669"/>
    <property type="project" value="TreeGrafter"/>
</dbReference>
<dbReference type="GO" id="GO:0005524">
    <property type="term" value="F:ATP binding"/>
    <property type="evidence" value="ECO:0007669"/>
    <property type="project" value="UniProtKB-UniRule"/>
</dbReference>
<dbReference type="GO" id="GO:0004370">
    <property type="term" value="F:glycerol kinase activity"/>
    <property type="evidence" value="ECO:0000250"/>
    <property type="project" value="UniProtKB"/>
</dbReference>
<dbReference type="GO" id="GO:0019563">
    <property type="term" value="P:glycerol catabolic process"/>
    <property type="evidence" value="ECO:0007669"/>
    <property type="project" value="UniProtKB-UniRule"/>
</dbReference>
<dbReference type="GO" id="GO:0006071">
    <property type="term" value="P:glycerol metabolic process"/>
    <property type="evidence" value="ECO:0000250"/>
    <property type="project" value="UniProtKB"/>
</dbReference>
<dbReference type="GO" id="GO:0006072">
    <property type="term" value="P:glycerol-3-phosphate metabolic process"/>
    <property type="evidence" value="ECO:0007669"/>
    <property type="project" value="InterPro"/>
</dbReference>
<dbReference type="CDD" id="cd07786">
    <property type="entry name" value="FGGY_EcGK_like"/>
    <property type="match status" value="1"/>
</dbReference>
<dbReference type="FunFam" id="3.30.420.40:FF:000007">
    <property type="entry name" value="Glycerol kinase"/>
    <property type="match status" value="1"/>
</dbReference>
<dbReference type="FunFam" id="3.30.420.40:FF:000008">
    <property type="entry name" value="Glycerol kinase"/>
    <property type="match status" value="1"/>
</dbReference>
<dbReference type="Gene3D" id="3.30.420.40">
    <property type="match status" value="2"/>
</dbReference>
<dbReference type="HAMAP" id="MF_00186">
    <property type="entry name" value="Glycerol_kin"/>
    <property type="match status" value="1"/>
</dbReference>
<dbReference type="InterPro" id="IPR043129">
    <property type="entry name" value="ATPase_NBD"/>
</dbReference>
<dbReference type="InterPro" id="IPR000577">
    <property type="entry name" value="Carb_kinase_FGGY"/>
</dbReference>
<dbReference type="InterPro" id="IPR018483">
    <property type="entry name" value="Carb_kinase_FGGY_CS"/>
</dbReference>
<dbReference type="InterPro" id="IPR018485">
    <property type="entry name" value="FGGY_C"/>
</dbReference>
<dbReference type="InterPro" id="IPR018484">
    <property type="entry name" value="FGGY_N"/>
</dbReference>
<dbReference type="InterPro" id="IPR005999">
    <property type="entry name" value="Glycerol_kin"/>
</dbReference>
<dbReference type="NCBIfam" id="TIGR01311">
    <property type="entry name" value="glycerol_kin"/>
    <property type="match status" value="1"/>
</dbReference>
<dbReference type="NCBIfam" id="NF000756">
    <property type="entry name" value="PRK00047.1"/>
    <property type="match status" value="1"/>
</dbReference>
<dbReference type="PANTHER" id="PTHR10196:SF69">
    <property type="entry name" value="GLYCEROL KINASE"/>
    <property type="match status" value="1"/>
</dbReference>
<dbReference type="PANTHER" id="PTHR10196">
    <property type="entry name" value="SUGAR KINASE"/>
    <property type="match status" value="1"/>
</dbReference>
<dbReference type="Pfam" id="PF02782">
    <property type="entry name" value="FGGY_C"/>
    <property type="match status" value="1"/>
</dbReference>
<dbReference type="Pfam" id="PF00370">
    <property type="entry name" value="FGGY_N"/>
    <property type="match status" value="1"/>
</dbReference>
<dbReference type="PIRSF" id="PIRSF000538">
    <property type="entry name" value="GlpK"/>
    <property type="match status" value="1"/>
</dbReference>
<dbReference type="SUPFAM" id="SSF53067">
    <property type="entry name" value="Actin-like ATPase domain"/>
    <property type="match status" value="2"/>
</dbReference>
<dbReference type="PROSITE" id="PS00445">
    <property type="entry name" value="FGGY_KINASES_2"/>
    <property type="match status" value="1"/>
</dbReference>
<name>GLPK_DESHD</name>
<sequence length="494" mass="54893">MKKYVLALDQGTTSCRAILFDRESQIVGVAQKEFTQIYPQPGWVEHDPEEVWSTQYGVIAELLARYQVTSEEIAGIGITNQRETTVVWDKHTGKSVTNAIVWQCRRTAPLCDELKMKGLEPLFKEKTGLVLDAYFSGTKIRWILDRVPGAQEKAEKGELLFGTMDTWLVWNLTKGRIHVTDYSNASRTLLYNIKTLAWDPDLLQVLNIPLAMLPEVKPSSTIYGETAAEGLFGHPIPIAGIAGDQQAALFGQACFAPGMAKNTYGTGCFMLLNTGEELYESRHGLISTIAWGLDEKVIYALEGSVFMAGAVMQWLRDELKLIETAGDSEYFAGKVADNGGVYLVPAFTGLGAPYWDMDARGAIVGLTRGSNKNHIIRAALESMAYQTRDILEAMEADSQLPLQLLKVDGGAVVNNLLMQFQADILGVEVERPHCIETTALGAAYLAGLAIGFWSSKEELRDKAKMERSFKPQMAEERKEKYYQGWHKAVRQIME</sequence>
<gene>
    <name evidence="1" type="primary">glpK</name>
    <name type="ordered locus">Dhaf_4681</name>
</gene>
<accession>B8FXS7</accession>
<proteinExistence type="inferred from homology"/>
<reference key="1">
    <citation type="journal article" date="2012" name="BMC Microbiol.">
        <title>Genome sequence of Desulfitobacterium hafniense DCB-2, a Gram-positive anaerobe capable of dehalogenation and metal reduction.</title>
        <authorList>
            <person name="Kim S.H."/>
            <person name="Harzman C."/>
            <person name="Davis J.K."/>
            <person name="Hutcheson R."/>
            <person name="Broderick J.B."/>
            <person name="Marsh T.L."/>
            <person name="Tiedje J.M."/>
        </authorList>
    </citation>
    <scope>NUCLEOTIDE SEQUENCE [LARGE SCALE GENOMIC DNA]</scope>
    <source>
        <strain>DSM 10664 / DCB-2</strain>
    </source>
</reference>
<protein>
    <recommendedName>
        <fullName evidence="1">Glycerol kinase</fullName>
        <ecNumber evidence="1">2.7.1.30</ecNumber>
    </recommendedName>
    <alternativeName>
        <fullName evidence="1">ATP:glycerol 3-phosphotransferase</fullName>
    </alternativeName>
    <alternativeName>
        <fullName evidence="1">Glycerokinase</fullName>
        <shortName evidence="1">GK</shortName>
    </alternativeName>
</protein>
<organism>
    <name type="scientific">Desulfitobacterium hafniense (strain DSM 10664 / DCB-2)</name>
    <dbReference type="NCBI Taxonomy" id="272564"/>
    <lineage>
        <taxon>Bacteria</taxon>
        <taxon>Bacillati</taxon>
        <taxon>Bacillota</taxon>
        <taxon>Clostridia</taxon>
        <taxon>Eubacteriales</taxon>
        <taxon>Desulfitobacteriaceae</taxon>
        <taxon>Desulfitobacterium</taxon>
    </lineage>
</organism>
<keyword id="KW-0067">ATP-binding</keyword>
<keyword id="KW-0319">Glycerol metabolism</keyword>
<keyword id="KW-0418">Kinase</keyword>
<keyword id="KW-0547">Nucleotide-binding</keyword>
<keyword id="KW-0808">Transferase</keyword>